<name>NADA_CYAPA</name>
<proteinExistence type="inferred from homology"/>
<sequence length="329" mass="36805">MSIFLKNKQFENITSQEQTKNNYKQLINDIQTLKKDLNAIILAHYYQEPDIQDVADFLGDSLGLAREAAKTNADIIVFAGVHFMAETAKILNPEKMVLLPDLNAGCSLADSCPPEIFSEFKKAHSDHLVISYINCSASIKAMSDIICTSANAVDIVNKIPLTQPILFAPDQNLGRYVISKTGRDLLLWPGSCIVHETFSEKKIFEFQSLYPTAEVIAHPECEPTILKHANYIGSTTSLLQYVKNSKKTTFIVITEPGIIHQMKKSCPEKQFLALPTVSGCACNECPHMRLNTLEKLYLAMKTRSPQIEIPESILLNAKKPIERMLEMSN</sequence>
<reference key="1">
    <citation type="journal article" date="1991" name="J. Biol. Chem.">
        <title>An ORF323 with homology to crtE, specifying prephytoene pyrophosphate dehydrogenase, is encoded by cyanelle DNA in the eukaryotic alga Cyanophora paradoxa.</title>
        <authorList>
            <person name="Michalowski C.B."/>
            <person name="Loeffelhardt W."/>
            <person name="Bohnert H.J."/>
        </authorList>
    </citation>
    <scope>NUCLEOTIDE SEQUENCE [GENOMIC DNA]</scope>
    <source>
        <strain>UTEX LB 555 / Pringsheim</strain>
    </source>
</reference>
<reference key="2">
    <citation type="journal article" date="1995" name="Plant Mol. Biol. Rep.">
        <title>Nucleotide sequence of the cyanelle DNA from Cyanophora paradoxa.</title>
        <authorList>
            <person name="Stirewalt V.L."/>
            <person name="Michalowski C.B."/>
            <person name="Loeffelhardt W."/>
            <person name="Bohnert H.J."/>
            <person name="Bryant D.A."/>
        </authorList>
    </citation>
    <scope>NUCLEOTIDE SEQUENCE [LARGE SCALE GENOMIC DNA]</scope>
    <source>
        <strain>UTEX LB 555 / Pringsheim</strain>
    </source>
</reference>
<reference key="3">
    <citation type="book" date="1997" name="Eukaryotism and symbiosis">
        <title>The complete sequence of the cyanelle genome of Cyanophora paradoxa: the genetic complexity of a primitive plastid.</title>
        <editorList>
            <person name="Schenk H.E.A."/>
            <person name="Herrmann R."/>
            <person name="Jeon K.W."/>
            <person name="Mueller N.E."/>
            <person name="Schwemmler W."/>
        </editorList>
        <authorList>
            <person name="Loeffelhardt W."/>
            <person name="Stirewalt V.L."/>
            <person name="Michalowski C.B."/>
            <person name="Annarella M."/>
            <person name="Farley J.Y."/>
            <person name="Schluchter W.M."/>
            <person name="Chung S."/>
            <person name="Newmann-Spallart C."/>
            <person name="Steiner J.M."/>
            <person name="Jakowitsch J."/>
            <person name="Bohnert H.J."/>
            <person name="Bryant D.A."/>
        </authorList>
    </citation>
    <scope>NUCLEOTIDE SEQUENCE [LARGE SCALE GENOMIC DNA]</scope>
    <source>
        <strain>UTEX LB 555 / Pringsheim</strain>
    </source>
</reference>
<comment type="function">
    <text evidence="1">Catalyzes the condensation of iminoaspartate with dihydroxyacetone phosphate to form quinolinate.</text>
</comment>
<comment type="catalytic activity">
    <reaction evidence="1">
        <text>iminosuccinate + dihydroxyacetone phosphate = quinolinate + phosphate + 2 H2O + H(+)</text>
        <dbReference type="Rhea" id="RHEA:25888"/>
        <dbReference type="ChEBI" id="CHEBI:15377"/>
        <dbReference type="ChEBI" id="CHEBI:15378"/>
        <dbReference type="ChEBI" id="CHEBI:29959"/>
        <dbReference type="ChEBI" id="CHEBI:43474"/>
        <dbReference type="ChEBI" id="CHEBI:57642"/>
        <dbReference type="ChEBI" id="CHEBI:77875"/>
        <dbReference type="EC" id="2.5.1.72"/>
    </reaction>
    <physiologicalReaction direction="left-to-right" evidence="1">
        <dbReference type="Rhea" id="RHEA:25889"/>
    </physiologicalReaction>
</comment>
<comment type="cofactor">
    <cofactor evidence="1">
        <name>[4Fe-4S] cluster</name>
        <dbReference type="ChEBI" id="CHEBI:49883"/>
    </cofactor>
    <text evidence="1">Binds 1 [4Fe-4S] cluster per subunit.</text>
</comment>
<comment type="pathway">
    <text evidence="1">Cofactor biosynthesis; NAD(+) biosynthesis; quinolinate from iminoaspartate: step 1/1.</text>
</comment>
<comment type="subcellular location">
    <subcellularLocation>
        <location>Plastid</location>
        <location>Cyanelle</location>
    </subcellularLocation>
</comment>
<comment type="similarity">
    <text evidence="1">Belongs to the quinolinate synthase family. Type 2 subfamily.</text>
</comment>
<evidence type="ECO:0000255" key="1">
    <source>
        <dbReference type="HAMAP-Rule" id="MF_00568"/>
    </source>
</evidence>
<dbReference type="EC" id="2.5.1.72" evidence="1"/>
<dbReference type="EMBL" id="M37111">
    <property type="protein sequence ID" value="AAA65473.1"/>
    <property type="molecule type" value="Genomic_DNA"/>
</dbReference>
<dbReference type="EMBL" id="U30821">
    <property type="protein sequence ID" value="AAA81216.1"/>
    <property type="molecule type" value="Genomic_DNA"/>
</dbReference>
<dbReference type="PIR" id="C40433">
    <property type="entry name" value="C40433"/>
</dbReference>
<dbReference type="PIR" id="T06873">
    <property type="entry name" value="T06873"/>
</dbReference>
<dbReference type="RefSeq" id="NP_043185.1">
    <property type="nucleotide sequence ID" value="NC_001675.1"/>
</dbReference>
<dbReference type="SMR" id="P31179"/>
<dbReference type="GeneID" id="801687"/>
<dbReference type="BRENDA" id="2.5.1.72">
    <property type="organism ID" value="1772"/>
</dbReference>
<dbReference type="UniPathway" id="UPA00253">
    <property type="reaction ID" value="UER00327"/>
</dbReference>
<dbReference type="GO" id="GO:0009842">
    <property type="term" value="C:cyanelle"/>
    <property type="evidence" value="ECO:0007669"/>
    <property type="project" value="UniProtKB-SubCell"/>
</dbReference>
<dbReference type="GO" id="GO:0005829">
    <property type="term" value="C:cytosol"/>
    <property type="evidence" value="ECO:0007669"/>
    <property type="project" value="TreeGrafter"/>
</dbReference>
<dbReference type="GO" id="GO:0051539">
    <property type="term" value="F:4 iron, 4 sulfur cluster binding"/>
    <property type="evidence" value="ECO:0007669"/>
    <property type="project" value="UniProtKB-KW"/>
</dbReference>
<dbReference type="GO" id="GO:0046872">
    <property type="term" value="F:metal ion binding"/>
    <property type="evidence" value="ECO:0007669"/>
    <property type="project" value="UniProtKB-KW"/>
</dbReference>
<dbReference type="GO" id="GO:0008987">
    <property type="term" value="F:quinolinate synthetase A activity"/>
    <property type="evidence" value="ECO:0007669"/>
    <property type="project" value="UniProtKB-UniRule"/>
</dbReference>
<dbReference type="GO" id="GO:0034628">
    <property type="term" value="P:'de novo' NAD biosynthetic process from L-aspartate"/>
    <property type="evidence" value="ECO:0007669"/>
    <property type="project" value="TreeGrafter"/>
</dbReference>
<dbReference type="FunFam" id="3.40.50.10800:FF:000001">
    <property type="entry name" value="Quinolinate synthase A"/>
    <property type="match status" value="1"/>
</dbReference>
<dbReference type="Gene3D" id="3.40.50.10800">
    <property type="entry name" value="NadA-like"/>
    <property type="match status" value="3"/>
</dbReference>
<dbReference type="HAMAP" id="MF_00568">
    <property type="entry name" value="NadA_type2"/>
    <property type="match status" value="1"/>
</dbReference>
<dbReference type="InterPro" id="IPR003473">
    <property type="entry name" value="NadA"/>
</dbReference>
<dbReference type="InterPro" id="IPR036094">
    <property type="entry name" value="NadA_sf"/>
</dbReference>
<dbReference type="InterPro" id="IPR023066">
    <property type="entry name" value="Quinolinate_synth_type2"/>
</dbReference>
<dbReference type="NCBIfam" id="TIGR00550">
    <property type="entry name" value="nadA"/>
    <property type="match status" value="1"/>
</dbReference>
<dbReference type="NCBIfam" id="NF006878">
    <property type="entry name" value="PRK09375.1-2"/>
    <property type="match status" value="1"/>
</dbReference>
<dbReference type="PANTHER" id="PTHR30573:SF0">
    <property type="entry name" value="QUINOLINATE SYNTHASE, CHLOROPLASTIC"/>
    <property type="match status" value="1"/>
</dbReference>
<dbReference type="PANTHER" id="PTHR30573">
    <property type="entry name" value="QUINOLINATE SYNTHETASE A"/>
    <property type="match status" value="1"/>
</dbReference>
<dbReference type="Pfam" id="PF02445">
    <property type="entry name" value="NadA"/>
    <property type="match status" value="1"/>
</dbReference>
<dbReference type="SUPFAM" id="SSF142754">
    <property type="entry name" value="NadA-like"/>
    <property type="match status" value="1"/>
</dbReference>
<keyword id="KW-0004">4Fe-4S</keyword>
<keyword id="KW-0194">Cyanelle</keyword>
<keyword id="KW-0408">Iron</keyword>
<keyword id="KW-0411">Iron-sulfur</keyword>
<keyword id="KW-0479">Metal-binding</keyword>
<keyword id="KW-0934">Plastid</keyword>
<keyword id="KW-0662">Pyridine nucleotide biosynthesis</keyword>
<keyword id="KW-0808">Transferase</keyword>
<geneLocation type="cyanelle"/>
<accession>P31179</accession>
<feature type="chain" id="PRO_0000155814" description="Quinolinate synthase">
    <location>
        <begin position="1"/>
        <end position="329"/>
    </location>
</feature>
<feature type="binding site" evidence="1">
    <location>
        <position position="44"/>
    </location>
    <ligand>
        <name>iminosuccinate</name>
        <dbReference type="ChEBI" id="CHEBI:77875"/>
    </ligand>
</feature>
<feature type="binding site" evidence="1">
    <location>
        <position position="61"/>
    </location>
    <ligand>
        <name>iminosuccinate</name>
        <dbReference type="ChEBI" id="CHEBI:77875"/>
    </ligand>
</feature>
<feature type="binding site" evidence="1">
    <location>
        <position position="106"/>
    </location>
    <ligand>
        <name>[4Fe-4S] cluster</name>
        <dbReference type="ChEBI" id="CHEBI:49883"/>
    </ligand>
</feature>
<feature type="binding site" evidence="1">
    <location>
        <begin position="132"/>
        <end position="134"/>
    </location>
    <ligand>
        <name>iminosuccinate</name>
        <dbReference type="ChEBI" id="CHEBI:77875"/>
    </ligand>
</feature>
<feature type="binding site" evidence="1">
    <location>
        <position position="149"/>
    </location>
    <ligand>
        <name>iminosuccinate</name>
        <dbReference type="ChEBI" id="CHEBI:77875"/>
    </ligand>
</feature>
<feature type="binding site" evidence="1">
    <location>
        <position position="192"/>
    </location>
    <ligand>
        <name>[4Fe-4S] cluster</name>
        <dbReference type="ChEBI" id="CHEBI:49883"/>
    </ligand>
</feature>
<feature type="binding site" evidence="1">
    <location>
        <begin position="218"/>
        <end position="220"/>
    </location>
    <ligand>
        <name>iminosuccinate</name>
        <dbReference type="ChEBI" id="CHEBI:77875"/>
    </ligand>
</feature>
<feature type="binding site" evidence="1">
    <location>
        <position position="235"/>
    </location>
    <ligand>
        <name>iminosuccinate</name>
        <dbReference type="ChEBI" id="CHEBI:77875"/>
    </ligand>
</feature>
<feature type="binding site" evidence="1">
    <location>
        <position position="285"/>
    </location>
    <ligand>
        <name>[4Fe-4S] cluster</name>
        <dbReference type="ChEBI" id="CHEBI:49883"/>
    </ligand>
</feature>
<gene>
    <name evidence="1" type="primary">nadA</name>
</gene>
<organism>
    <name type="scientific">Cyanophora paradoxa</name>
    <dbReference type="NCBI Taxonomy" id="2762"/>
    <lineage>
        <taxon>Eukaryota</taxon>
        <taxon>Glaucocystophyceae</taxon>
        <taxon>Cyanophoraceae</taxon>
        <taxon>Cyanophora</taxon>
    </lineage>
</organism>
<protein>
    <recommendedName>
        <fullName evidence="1">Quinolinate synthase</fullName>
        <ecNumber evidence="1">2.5.1.72</ecNumber>
    </recommendedName>
</protein>